<dbReference type="EC" id="1.10.3.9" evidence="1"/>
<dbReference type="EMBL" id="D14325">
    <property type="protein sequence ID" value="BAA03264.1"/>
    <property type="molecule type" value="Genomic_DNA"/>
</dbReference>
<dbReference type="SMR" id="P0A447"/>
<dbReference type="GO" id="GO:0009523">
    <property type="term" value="C:photosystem II"/>
    <property type="evidence" value="ECO:0007669"/>
    <property type="project" value="UniProtKB-KW"/>
</dbReference>
<dbReference type="GO" id="GO:0031676">
    <property type="term" value="C:plasma membrane-derived thylakoid membrane"/>
    <property type="evidence" value="ECO:0007669"/>
    <property type="project" value="UniProtKB-SubCell"/>
</dbReference>
<dbReference type="GO" id="GO:0016168">
    <property type="term" value="F:chlorophyll binding"/>
    <property type="evidence" value="ECO:0007669"/>
    <property type="project" value="UniProtKB-UniRule"/>
</dbReference>
<dbReference type="GO" id="GO:0045156">
    <property type="term" value="F:electron transporter, transferring electrons within the cyclic electron transport pathway of photosynthesis activity"/>
    <property type="evidence" value="ECO:0007669"/>
    <property type="project" value="InterPro"/>
</dbReference>
<dbReference type="GO" id="GO:0005506">
    <property type="term" value="F:iron ion binding"/>
    <property type="evidence" value="ECO:0007669"/>
    <property type="project" value="UniProtKB-UniRule"/>
</dbReference>
<dbReference type="GO" id="GO:0016682">
    <property type="term" value="F:oxidoreductase activity, acting on diphenols and related substances as donors, oxygen as acceptor"/>
    <property type="evidence" value="ECO:0007669"/>
    <property type="project" value="UniProtKB-UniRule"/>
</dbReference>
<dbReference type="GO" id="GO:0010242">
    <property type="term" value="F:oxygen evolving activity"/>
    <property type="evidence" value="ECO:0007669"/>
    <property type="project" value="UniProtKB-EC"/>
</dbReference>
<dbReference type="GO" id="GO:0009772">
    <property type="term" value="P:photosynthetic electron transport in photosystem II"/>
    <property type="evidence" value="ECO:0007669"/>
    <property type="project" value="InterPro"/>
</dbReference>
<dbReference type="GO" id="GO:0009635">
    <property type="term" value="P:response to herbicide"/>
    <property type="evidence" value="ECO:0007669"/>
    <property type="project" value="UniProtKB-KW"/>
</dbReference>
<dbReference type="CDD" id="cd09289">
    <property type="entry name" value="Photosystem-II_D1"/>
    <property type="match status" value="1"/>
</dbReference>
<dbReference type="FunFam" id="1.20.85.10:FF:000002">
    <property type="entry name" value="Photosystem II protein D1"/>
    <property type="match status" value="1"/>
</dbReference>
<dbReference type="Gene3D" id="1.20.85.10">
    <property type="entry name" value="Photosystem II protein D1-like"/>
    <property type="match status" value="2"/>
</dbReference>
<dbReference type="HAMAP" id="MF_01379">
    <property type="entry name" value="PSII_PsbA_D1"/>
    <property type="match status" value="1"/>
</dbReference>
<dbReference type="InterPro" id="IPR055266">
    <property type="entry name" value="D1/D2"/>
</dbReference>
<dbReference type="InterPro" id="IPR036854">
    <property type="entry name" value="Photo_II_D1/D2_sf"/>
</dbReference>
<dbReference type="InterPro" id="IPR000484">
    <property type="entry name" value="Photo_RC_L/M"/>
</dbReference>
<dbReference type="InterPro" id="IPR055265">
    <property type="entry name" value="Photo_RC_L/M_CS"/>
</dbReference>
<dbReference type="InterPro" id="IPR005867">
    <property type="entry name" value="PSII_D1"/>
</dbReference>
<dbReference type="NCBIfam" id="TIGR01151">
    <property type="entry name" value="psbA"/>
    <property type="match status" value="1"/>
</dbReference>
<dbReference type="PANTHER" id="PTHR33149:SF12">
    <property type="entry name" value="PHOTOSYSTEM II D2 PROTEIN"/>
    <property type="match status" value="1"/>
</dbReference>
<dbReference type="PANTHER" id="PTHR33149">
    <property type="entry name" value="PHOTOSYSTEM II PROTEIN D1"/>
    <property type="match status" value="1"/>
</dbReference>
<dbReference type="Pfam" id="PF00124">
    <property type="entry name" value="Photo_RC"/>
    <property type="match status" value="1"/>
</dbReference>
<dbReference type="PRINTS" id="PR00256">
    <property type="entry name" value="REACTNCENTRE"/>
</dbReference>
<dbReference type="SUPFAM" id="SSF81483">
    <property type="entry name" value="Bacterial photosystem II reaction centre, L and M subunits"/>
    <property type="match status" value="1"/>
</dbReference>
<dbReference type="PROSITE" id="PS00244">
    <property type="entry name" value="REACTION_CENTER"/>
    <property type="match status" value="1"/>
</dbReference>
<keyword id="KW-0106">Calcium</keyword>
<keyword id="KW-0148">Chlorophyll</keyword>
<keyword id="KW-0157">Chromophore</keyword>
<keyword id="KW-0249">Electron transport</keyword>
<keyword id="KW-0359">Herbicide resistance</keyword>
<keyword id="KW-0408">Iron</keyword>
<keyword id="KW-0460">Magnesium</keyword>
<keyword id="KW-0464">Manganese</keyword>
<keyword id="KW-0472">Membrane</keyword>
<keyword id="KW-0479">Metal-binding</keyword>
<keyword id="KW-0560">Oxidoreductase</keyword>
<keyword id="KW-0602">Photosynthesis</keyword>
<keyword id="KW-0604">Photosystem II</keyword>
<keyword id="KW-0793">Thylakoid</keyword>
<keyword id="KW-0812">Transmembrane</keyword>
<keyword id="KW-1133">Transmembrane helix</keyword>
<keyword id="KW-0813">Transport</keyword>
<feature type="chain" id="PRO_0000090488" description="Photosystem II protein D1 2" evidence="1">
    <location>
        <begin position="1"/>
        <end position="344"/>
    </location>
</feature>
<feature type="propeptide" id="PRO_0000316379" evidence="1">
    <location>
        <begin position="345"/>
        <end position="360"/>
    </location>
</feature>
<feature type="transmembrane region" description="Helical" evidence="1">
    <location>
        <begin position="29"/>
        <end position="46"/>
    </location>
</feature>
<feature type="transmembrane region" description="Helical" evidence="1">
    <location>
        <begin position="118"/>
        <end position="133"/>
    </location>
</feature>
<feature type="transmembrane region" description="Helical" evidence="1">
    <location>
        <begin position="142"/>
        <end position="156"/>
    </location>
</feature>
<feature type="transmembrane region" description="Helical" evidence="1">
    <location>
        <begin position="197"/>
        <end position="218"/>
    </location>
</feature>
<feature type="transmembrane region" description="Helical" evidence="1">
    <location>
        <begin position="274"/>
        <end position="288"/>
    </location>
</feature>
<feature type="binding site" description="axial binding residue" evidence="1">
    <location>
        <position position="118"/>
    </location>
    <ligand>
        <name>chlorophyll a</name>
        <dbReference type="ChEBI" id="CHEBI:58416"/>
        <label>ChlzD1</label>
    </ligand>
    <ligandPart>
        <name>Mg</name>
        <dbReference type="ChEBI" id="CHEBI:25107"/>
    </ligandPart>
</feature>
<feature type="binding site" evidence="1">
    <location>
        <position position="126"/>
    </location>
    <ligand>
        <name>pheophytin a</name>
        <dbReference type="ChEBI" id="CHEBI:136840"/>
        <label>D1</label>
    </ligand>
</feature>
<feature type="binding site" evidence="1">
    <location>
        <position position="170"/>
    </location>
    <ligand>
        <name>[CaMn4O5] cluster</name>
        <dbReference type="ChEBI" id="CHEBI:189552"/>
    </ligand>
</feature>
<feature type="binding site" evidence="1">
    <location>
        <position position="189"/>
    </location>
    <ligand>
        <name>[CaMn4O5] cluster</name>
        <dbReference type="ChEBI" id="CHEBI:189552"/>
    </ligand>
</feature>
<feature type="binding site" description="axial binding residue" evidence="1">
    <location>
        <position position="198"/>
    </location>
    <ligand>
        <name>chlorophyll a</name>
        <dbReference type="ChEBI" id="CHEBI:58416"/>
        <label>PD1</label>
    </ligand>
    <ligandPart>
        <name>Mg</name>
        <dbReference type="ChEBI" id="CHEBI:25107"/>
    </ligandPart>
</feature>
<feature type="binding site" evidence="1">
    <location>
        <position position="215"/>
    </location>
    <ligand>
        <name>a quinone</name>
        <dbReference type="ChEBI" id="CHEBI:132124"/>
        <label>B</label>
    </ligand>
</feature>
<feature type="binding site" evidence="1">
    <location>
        <position position="215"/>
    </location>
    <ligand>
        <name>Fe cation</name>
        <dbReference type="ChEBI" id="CHEBI:24875"/>
        <note>ligand shared with heterodimeric partner</note>
    </ligand>
</feature>
<feature type="binding site" evidence="1">
    <location>
        <begin position="264"/>
        <end position="265"/>
    </location>
    <ligand>
        <name>a quinone</name>
        <dbReference type="ChEBI" id="CHEBI:132124"/>
        <label>B</label>
    </ligand>
</feature>
<feature type="binding site" evidence="1">
    <location>
        <position position="272"/>
    </location>
    <ligand>
        <name>Fe cation</name>
        <dbReference type="ChEBI" id="CHEBI:24875"/>
        <note>ligand shared with heterodimeric partner</note>
    </ligand>
</feature>
<feature type="binding site" evidence="1">
    <location>
        <position position="332"/>
    </location>
    <ligand>
        <name>[CaMn4O5] cluster</name>
        <dbReference type="ChEBI" id="CHEBI:189552"/>
    </ligand>
</feature>
<feature type="binding site" evidence="1">
    <location>
        <position position="333"/>
    </location>
    <ligand>
        <name>[CaMn4O5] cluster</name>
        <dbReference type="ChEBI" id="CHEBI:189552"/>
    </ligand>
</feature>
<feature type="binding site" evidence="1">
    <location>
        <position position="342"/>
    </location>
    <ligand>
        <name>[CaMn4O5] cluster</name>
        <dbReference type="ChEBI" id="CHEBI:189552"/>
    </ligand>
</feature>
<feature type="binding site" evidence="1">
    <location>
        <position position="344"/>
    </location>
    <ligand>
        <name>[CaMn4O5] cluster</name>
        <dbReference type="ChEBI" id="CHEBI:189552"/>
    </ligand>
</feature>
<feature type="site" description="Tyrosine radical intermediate" evidence="1">
    <location>
        <position position="161"/>
    </location>
</feature>
<feature type="site" description="Stabilizes free radical intermediate" evidence="1">
    <location>
        <position position="190"/>
    </location>
</feature>
<feature type="site" description="Cleavage; by CtpA" evidence="1">
    <location>
        <begin position="344"/>
        <end position="345"/>
    </location>
</feature>
<gene>
    <name evidence="1 2" type="primary">psbA2</name>
    <name type="synonym">psbA-2</name>
</gene>
<organism>
    <name type="scientific">Synechococcus elongatus</name>
    <dbReference type="NCBI Taxonomy" id="32046"/>
    <lineage>
        <taxon>Bacteria</taxon>
        <taxon>Bacillati</taxon>
        <taxon>Cyanobacteriota</taxon>
        <taxon>Cyanophyceae</taxon>
        <taxon>Synechococcales</taxon>
        <taxon>Synechococcaceae</taxon>
        <taxon>Synechococcus</taxon>
    </lineage>
</organism>
<sequence>MTTVLQRRQTANLWERFCDWITSTENRLYIGWFGVIMIPTLLAATICFVIAFIAAPPVDIDGIREPVSGSLLYGNNIITAAVVPSSNAIGLHLYPIWDAASLDEWLYNGGPYQLIIFHFLIGIFCYMGREWELSYRLGMRPWIPVAFSAPVAAATAVLLIYPIGQGSFSDGLMLGISGTFNFMIVFQAEHNILMHPFHMLGVAGVFGGALFAAMHGSLVTSSLIRETTETESTNYGYKFGQEEETYNIVAAHGYFGRLIFQYASFNNSRSLHFFLAAWPVVGIWFAALGISTMAFNLNGFNFNHSVVDAQGNVINTWADIINRANIGIEVMHERNAHNFPLDLASGELAPVAMIAPSIEA</sequence>
<proteinExistence type="inferred from homology"/>
<reference key="1">
    <citation type="journal article" date="1995" name="Plant Physiol.">
        <title>The two psbA genes from the thermophilic cyanobacterium Synechococcus elongatus.</title>
        <authorList>
            <person name="Motoki A."/>
            <person name="Shimazu T."/>
            <person name="Hirano M."/>
            <person name="Katoh S."/>
        </authorList>
    </citation>
    <scope>NUCLEOTIDE SEQUENCE [GENOMIC DNA]</scope>
</reference>
<evidence type="ECO:0000255" key="1">
    <source>
        <dbReference type="HAMAP-Rule" id="MF_01379"/>
    </source>
</evidence>
<evidence type="ECO:0000305" key="2"/>
<name>PSBA2_SYNEL</name>
<comment type="function">
    <text evidence="1">Photosystem II (PSII) is a light-driven water:plastoquinone oxidoreductase that uses light energy to abstract electrons from H(2)O, generating O(2) and a proton gradient subsequently used for ATP formation. It consists of a core antenna complex that captures photons, and an electron transfer chain that converts photonic excitation into a charge separation. The D1/D2 (PsbA/PsbD) reaction center heterodimer binds P680, the primary electron donor of PSII as well as several subsequent electron acceptors.</text>
</comment>
<comment type="catalytic activity">
    <reaction evidence="1">
        <text>2 a plastoquinone + 4 hnu + 2 H2O = 2 a plastoquinol + O2</text>
        <dbReference type="Rhea" id="RHEA:36359"/>
        <dbReference type="Rhea" id="RHEA-COMP:9561"/>
        <dbReference type="Rhea" id="RHEA-COMP:9562"/>
        <dbReference type="ChEBI" id="CHEBI:15377"/>
        <dbReference type="ChEBI" id="CHEBI:15379"/>
        <dbReference type="ChEBI" id="CHEBI:17757"/>
        <dbReference type="ChEBI" id="CHEBI:30212"/>
        <dbReference type="ChEBI" id="CHEBI:62192"/>
        <dbReference type="EC" id="1.10.3.9"/>
    </reaction>
</comment>
<comment type="cofactor">
    <text evidence="1">The D1/D2 heterodimer binds P680, chlorophylls that are the primary electron donor of PSII, and subsequent electron acceptors. It shares a non-heme iron and each subunit binds pheophytin, quinone, additional chlorophylls, carotenoids and lipids. D1 provides most of the ligands for the Mn4-Ca-O5 cluster of the oxygen-evolving complex (OEC). There is also a Cl(-1) ion associated with D1 and D2, which is required for oxygen evolution. The PSII complex binds additional chlorophylls, carotenoids and specific lipids.</text>
</comment>
<comment type="subunit">
    <text evidence="1">PSII is composed of 1 copy each of membrane proteins PsbA, PsbB, PsbC, PsbD, PsbE, PsbF, PsbH, PsbI, PsbJ, PsbK, PsbL, PsbM, PsbT, PsbX, PsbY, PsbZ, Psb30/Ycf12, peripheral proteins PsbO, CyanoQ (PsbQ), PsbU, PsbV and a large number of cofactors. It forms dimeric complexes.</text>
</comment>
<comment type="subcellular location">
    <subcellularLocation>
        <location evidence="1">Cellular thylakoid membrane</location>
        <topology evidence="1">Multi-pass membrane protein</topology>
    </subcellularLocation>
</comment>
<comment type="PTM">
    <text evidence="1">Tyr-161 forms a radical intermediate that is referred to as redox-active TyrZ, YZ or Y-Z.</text>
</comment>
<comment type="PTM">
    <text evidence="1">C-terminally processed by CtpA; processing is essential to allow assembly of the oxygen-evolving complex and thus photosynthetic growth.</text>
</comment>
<comment type="miscellaneous">
    <text evidence="1">Cyanobacteria usually contain more than 2 copies of the psbA gene.</text>
</comment>
<comment type="miscellaneous">
    <text evidence="1">2 of the reaction center chlorophylls (ChlD1 and ChlD2) are entirely coordinated by water.</text>
</comment>
<comment type="miscellaneous">
    <text evidence="1">Herbicides such as atrazine, BNT, diuron or ioxynil bind in the Q(B) binding site and block subsequent electron transfer.</text>
</comment>
<comment type="similarity">
    <text evidence="1">Belongs to the reaction center PufL/M/PsbA/D family.</text>
</comment>
<protein>
    <recommendedName>
        <fullName evidence="1">Photosystem II protein D1 2</fullName>
        <shortName evidence="1">PSII D1 protein 2</shortName>
        <ecNumber evidence="1">1.10.3.9</ecNumber>
    </recommendedName>
    <alternativeName>
        <fullName evidence="1">Photosystem II Q(B) protein 2</fullName>
    </alternativeName>
</protein>
<accession>P0A447</accession>
<accession>P35877</accession>